<keyword id="KW-1003">Cell membrane</keyword>
<keyword id="KW-0472">Membrane</keyword>
<keyword id="KW-1185">Reference proteome</keyword>
<protein>
    <recommendedName>
        <fullName>Ventricular zone-expressed PH domain-containing protein homolog 1</fullName>
    </recommendedName>
    <alternativeName>
        <fullName>Protein melted homolog</fullName>
    </alternativeName>
</protein>
<evidence type="ECO:0000250" key="1"/>
<evidence type="ECO:0000250" key="2">
    <source>
        <dbReference type="UniProtKB" id="Q14D04"/>
    </source>
</evidence>
<evidence type="ECO:0000250" key="3">
    <source>
        <dbReference type="UniProtKB" id="Q9VS24"/>
    </source>
</evidence>
<evidence type="ECO:0000255" key="4">
    <source>
        <dbReference type="PROSITE-ProRule" id="PRU00145"/>
    </source>
</evidence>
<evidence type="ECO:0000256" key="5">
    <source>
        <dbReference type="SAM" id="MobiDB-lite"/>
    </source>
</evidence>
<evidence type="ECO:0000305" key="6"/>
<dbReference type="EMBL" id="BC087055">
    <property type="protein sequence ID" value="AAH87055.1"/>
    <property type="molecule type" value="mRNA"/>
</dbReference>
<dbReference type="RefSeq" id="NP_001014193.1">
    <property type="nucleotide sequence ID" value="NM_001014171.1"/>
</dbReference>
<dbReference type="FunCoup" id="Q5PQS3">
    <property type="interactions" value="60"/>
</dbReference>
<dbReference type="STRING" id="10116.ENSRNOP00000073921"/>
<dbReference type="iPTMnet" id="Q5PQS3"/>
<dbReference type="PhosphoSitePlus" id="Q5PQS3"/>
<dbReference type="PaxDb" id="10116-ENSRNOP00000016621"/>
<dbReference type="Ensembl" id="ENSRNOT00000016621.7">
    <property type="protein sequence ID" value="ENSRNOP00000016621.5"/>
    <property type="gene ID" value="ENSRNOG00000012427.7"/>
</dbReference>
<dbReference type="GeneID" id="361954"/>
<dbReference type="KEGG" id="rno:361954"/>
<dbReference type="UCSC" id="RGD:1308217">
    <property type="organism name" value="rat"/>
</dbReference>
<dbReference type="AGR" id="RGD:1308217"/>
<dbReference type="CTD" id="79674"/>
<dbReference type="RGD" id="1308217">
    <property type="gene designation" value="Veph1"/>
</dbReference>
<dbReference type="eggNOG" id="KOG3723">
    <property type="taxonomic scope" value="Eukaryota"/>
</dbReference>
<dbReference type="GeneTree" id="ENSGT00390000018660"/>
<dbReference type="InParanoid" id="Q5PQS3"/>
<dbReference type="PhylomeDB" id="Q5PQS3"/>
<dbReference type="TreeFam" id="TF314736"/>
<dbReference type="PRO" id="PR:Q5PQS3"/>
<dbReference type="Proteomes" id="UP000002494">
    <property type="component" value="Chromosome 2"/>
</dbReference>
<dbReference type="Bgee" id="ENSRNOG00000012427">
    <property type="expression patterns" value="Expressed in heart and 9 other cell types or tissues"/>
</dbReference>
<dbReference type="ExpressionAtlas" id="Q5PQS3">
    <property type="expression patterns" value="baseline and differential"/>
</dbReference>
<dbReference type="GO" id="GO:0005886">
    <property type="term" value="C:plasma membrane"/>
    <property type="evidence" value="ECO:0000318"/>
    <property type="project" value="GO_Central"/>
</dbReference>
<dbReference type="GO" id="GO:0010314">
    <property type="term" value="F:phosphatidylinositol-5-phosphate binding"/>
    <property type="evidence" value="ECO:0000318"/>
    <property type="project" value="GO_Central"/>
</dbReference>
<dbReference type="GO" id="GO:0060392">
    <property type="term" value="P:negative regulation of SMAD protein signal transduction"/>
    <property type="evidence" value="ECO:0000250"/>
    <property type="project" value="UniProtKB"/>
</dbReference>
<dbReference type="GO" id="GO:0030512">
    <property type="term" value="P:negative regulation of transforming growth factor beta receptor signaling pathway"/>
    <property type="evidence" value="ECO:0000250"/>
    <property type="project" value="UniProtKB"/>
</dbReference>
<dbReference type="GO" id="GO:0009966">
    <property type="term" value="P:regulation of signal transduction"/>
    <property type="evidence" value="ECO:0000318"/>
    <property type="project" value="GO_Central"/>
</dbReference>
<dbReference type="CDD" id="cd01264">
    <property type="entry name" value="PH_MELT_VEPH1"/>
    <property type="match status" value="1"/>
</dbReference>
<dbReference type="FunFam" id="2.30.29.30:FF:000138">
    <property type="entry name" value="Ventricular zone-expressed PH domain-containing protein-like 1"/>
    <property type="match status" value="1"/>
</dbReference>
<dbReference type="Gene3D" id="2.30.29.30">
    <property type="entry name" value="Pleckstrin-homology domain (PH domain)/Phosphotyrosine-binding domain (PTB)"/>
    <property type="match status" value="1"/>
</dbReference>
<dbReference type="InterPro" id="IPR016024">
    <property type="entry name" value="ARM-type_fold"/>
</dbReference>
<dbReference type="InterPro" id="IPR039888">
    <property type="entry name" value="Melted-like"/>
</dbReference>
<dbReference type="InterPro" id="IPR011993">
    <property type="entry name" value="PH-like_dom_sf"/>
</dbReference>
<dbReference type="InterPro" id="IPR001849">
    <property type="entry name" value="PH_domain"/>
</dbReference>
<dbReference type="PANTHER" id="PTHR21630:SF10">
    <property type="entry name" value="VENTRICULAR ZONE-EXPRESSED PH DOMAIN-CONTAINING PROTEIN HOMOLOG 1"/>
    <property type="match status" value="1"/>
</dbReference>
<dbReference type="PANTHER" id="PTHR21630">
    <property type="entry name" value="VEPH-A/MELTED"/>
    <property type="match status" value="1"/>
</dbReference>
<dbReference type="Pfam" id="PF00169">
    <property type="entry name" value="PH"/>
    <property type="match status" value="1"/>
</dbReference>
<dbReference type="SMART" id="SM00233">
    <property type="entry name" value="PH"/>
    <property type="match status" value="1"/>
</dbReference>
<dbReference type="SUPFAM" id="SSF48371">
    <property type="entry name" value="ARM repeat"/>
    <property type="match status" value="1"/>
</dbReference>
<dbReference type="SUPFAM" id="SSF50729">
    <property type="entry name" value="PH domain-like"/>
    <property type="match status" value="1"/>
</dbReference>
<dbReference type="PROSITE" id="PS50003">
    <property type="entry name" value="PH_DOMAIN"/>
    <property type="match status" value="1"/>
</dbReference>
<accession>Q5PQS3</accession>
<proteinExistence type="evidence at transcript level"/>
<organism>
    <name type="scientific">Rattus norvegicus</name>
    <name type="common">Rat</name>
    <dbReference type="NCBI Taxonomy" id="10116"/>
    <lineage>
        <taxon>Eukaryota</taxon>
        <taxon>Metazoa</taxon>
        <taxon>Chordata</taxon>
        <taxon>Craniata</taxon>
        <taxon>Vertebrata</taxon>
        <taxon>Euteleostomi</taxon>
        <taxon>Mammalia</taxon>
        <taxon>Eutheria</taxon>
        <taxon>Euarchontoglires</taxon>
        <taxon>Glires</taxon>
        <taxon>Rodentia</taxon>
        <taxon>Myomorpha</taxon>
        <taxon>Muroidea</taxon>
        <taxon>Muridae</taxon>
        <taxon>Murinae</taxon>
        <taxon>Rattus</taxon>
    </lineage>
</organism>
<feature type="chain" id="PRO_0000297957" description="Ventricular zone-expressed PH domain-containing protein homolog 1">
    <location>
        <begin position="1"/>
        <end position="832"/>
    </location>
</feature>
<feature type="domain" description="PH" evidence="4">
    <location>
        <begin position="716"/>
        <end position="818"/>
    </location>
</feature>
<feature type="region of interest" description="Interaction with TGFBR1" evidence="2">
    <location>
        <begin position="201"/>
        <end position="319"/>
    </location>
</feature>
<feature type="region of interest" description="Disordered" evidence="5">
    <location>
        <begin position="497"/>
        <end position="519"/>
    </location>
</feature>
<feature type="region of interest" description="Interaction with TGFBR1" evidence="2">
    <location>
        <begin position="663"/>
        <end position="832"/>
    </location>
</feature>
<feature type="compositionally biased region" description="Polar residues" evidence="5">
    <location>
        <begin position="499"/>
        <end position="510"/>
    </location>
</feature>
<comment type="function">
    <text evidence="2">Interacts with TGF-beta receptor type-1 (TGFBR1) and inhibits dissociation of activated SMAD2 from TGFBR1, impeding its nuclear accumulation and resulting in impaired TGF-beta signaling. May also affect FOXO, Hippo and Wnt signaling.</text>
</comment>
<comment type="subunit">
    <text evidence="2">Interacts with TGFBR1.</text>
</comment>
<comment type="subcellular location">
    <subcellularLocation>
        <location evidence="2">Cell membrane</location>
        <topology evidence="3">Peripheral membrane protein</topology>
        <orientation evidence="3">Cytoplasmic side</orientation>
    </subcellularLocation>
</comment>
<comment type="domain">
    <text evidence="1">The PH domain is required for membrane targeting.</text>
</comment>
<comment type="similarity">
    <text evidence="6">Belongs to the MELT/VEPH family.</text>
</comment>
<gene>
    <name type="primary">Veph1</name>
</gene>
<sequence>MHQLFRLVLGQKDLSRAGDLFSLDDAEIEDSLTEALEQIKVISSSLDYQTNNNDQAVVEICITRITTAIRETESIEKHARALVGLWDSCLEHNLRPAGKDEDTPHAKIASDIMSCILQNYNRTPVMVLAVPIAVKFLHRGSKELCRNMSNYLSLAAITKADLLADHTEGIVKSILQGNAMLLRVLPAVYEKQPQPINRHLAELLALMSQLEQTEQYHLLRLLHVAAKRKDVEVVQKCVPFLIRNLKESTYNDIILNILIEIAGHEPLALNSFLPMLKEIAEQFPYLTGQMARIFGAVGHVDEERARSCLRYLVSQLANMEHSFHHILLLEIKSLTDAFSSILGPHSRDIFRMSNSFTNIAKLLSRQLENSKAESGRRRTGTEVSFPEKFREPKTMEPKSEDHEKLQVKIQAFEDKINAESHTPGSVRRYSLDHVSKEERKNVRFSRSRSLALNTVLTNSVNVEDGEIEGKTGMHASISLSEIDPPGHGIGKVPFKTDTHGSQLRNSSASHPSIIHSEPENMPETFKENVQEEIPEAAISPVEYQDKLYLHLKENLSKVKAYALEIAKKVPIPDQCTIEDNTRSCVAKLFFTCSLKGHYCLYSKSSFTLVSQAPQPWIQIMFLFQQSLFPEPLSIQSGSVQFLKALWEKTQGTGTHSFEVAMTESTFPQQKDLDQLQLHLEEVRFFDVFGFSETAGAWQCFMCNNPEKATVINQDGQPLIEGKLKEKQVRWKFIKRWKTRYFTLAGNQLLFQKGKSDDPDDSPIELSKVQSVKAVAKKRRDRSLPRAFEIFTDNKTYVFKAKDEKNAEEWLQCINVALAQAKERESREVTTYL</sequence>
<reference key="1">
    <citation type="journal article" date="2004" name="Genome Res.">
        <title>The status, quality, and expansion of the NIH full-length cDNA project: the Mammalian Gene Collection (MGC).</title>
        <authorList>
            <consortium name="The MGC Project Team"/>
        </authorList>
    </citation>
    <scope>NUCLEOTIDE SEQUENCE [LARGE SCALE MRNA]</scope>
    <source>
        <tissue>Lung</tissue>
    </source>
</reference>
<name>MELT_RAT</name>